<feature type="chain" id="PRO_0000202721" description="Protein YIP4">
    <location>
        <begin position="1"/>
        <end position="235"/>
    </location>
</feature>
<feature type="transmembrane region" description="Helical" evidence="1">
    <location>
        <begin position="89"/>
        <end position="109"/>
    </location>
</feature>
<feature type="transmembrane region" description="Helical" evidence="1">
    <location>
        <begin position="114"/>
        <end position="134"/>
    </location>
</feature>
<feature type="transmembrane region" description="Helical" evidence="1">
    <location>
        <begin position="145"/>
        <end position="165"/>
    </location>
</feature>
<feature type="transmembrane region" description="Helical" evidence="1">
    <location>
        <begin position="186"/>
        <end position="206"/>
    </location>
</feature>
<feature type="transmembrane region" description="Helical" evidence="1">
    <location>
        <begin position="215"/>
        <end position="235"/>
    </location>
</feature>
<sequence length="235" mass="25995">MSYGREDTTIEPDFIEPDAPLAASGGVADNIGGTMQNSGSRGTLDETVLQTLKRDVVEINSRLKQVVYPHFPSFFSPSDDGIGAADNDISANCDLWAPLAFIILYSLFVSHARSLFSSLFVSSWFILLVMALHLRLTKPHQRVSLISYISISGYCLFPQVLNALVSQILLPLAYHIGKQNRWIVRVLSLVKLVVMALCLMWSVAAVSWVTKSKTIIEIYPLALCLFGMAWLSTIL</sequence>
<evidence type="ECO:0000255" key="1"/>
<evidence type="ECO:0000269" key="2">
    <source>
    </source>
</evidence>
<evidence type="ECO:0000269" key="3">
    <source>
    </source>
</evidence>
<evidence type="ECO:0000305" key="4"/>
<dbReference type="EMBL" id="X91837">
    <property type="protein sequence ID" value="CAA62946.1"/>
    <property type="status" value="ALT_FRAME"/>
    <property type="molecule type" value="Genomic_DNA"/>
</dbReference>
<dbReference type="EMBL" id="Z72721">
    <property type="protein sequence ID" value="CAA96911.1"/>
    <property type="status" value="ALT_FRAME"/>
    <property type="molecule type" value="Genomic_DNA"/>
</dbReference>
<dbReference type="EMBL" id="BK006941">
    <property type="protein sequence ID" value="DAA07916.1"/>
    <property type="molecule type" value="Genomic_DNA"/>
</dbReference>
<dbReference type="PIR" id="S62047">
    <property type="entry name" value="S62047"/>
</dbReference>
<dbReference type="RefSeq" id="NP_011317.2">
    <property type="nucleotide sequence ID" value="NM_001181063.1"/>
</dbReference>
<dbReference type="BioGRID" id="33059">
    <property type="interactions" value="87"/>
</dbReference>
<dbReference type="DIP" id="DIP-1823N"/>
<dbReference type="FunCoup" id="P53093">
    <property type="interactions" value="165"/>
</dbReference>
<dbReference type="IntAct" id="P53093">
    <property type="interactions" value="22"/>
</dbReference>
<dbReference type="MINT" id="P53093"/>
<dbReference type="STRING" id="4932.YGL198W"/>
<dbReference type="TCDB" id="9.B.135.1.6">
    <property type="family name" value="the membrane trafficking yip (yip) family"/>
</dbReference>
<dbReference type="iPTMnet" id="P53093"/>
<dbReference type="PaxDb" id="4932-YGL198W"/>
<dbReference type="PeptideAtlas" id="P53093"/>
<dbReference type="EnsemblFungi" id="YGL198W_mRNA">
    <property type="protein sequence ID" value="YGL198W"/>
    <property type="gene ID" value="YGL198W"/>
</dbReference>
<dbReference type="GeneID" id="852676"/>
<dbReference type="KEGG" id="sce:YGL198W"/>
<dbReference type="AGR" id="SGD:S000003166"/>
<dbReference type="SGD" id="S000003166">
    <property type="gene designation" value="YIP4"/>
</dbReference>
<dbReference type="VEuPathDB" id="FungiDB:YGL198W"/>
<dbReference type="eggNOG" id="KOG2946">
    <property type="taxonomic scope" value="Eukaryota"/>
</dbReference>
<dbReference type="GeneTree" id="ENSGT00940000153168"/>
<dbReference type="HOGENOM" id="CLU_1166411_0_0_1"/>
<dbReference type="InParanoid" id="P53093"/>
<dbReference type="OMA" id="VVTMQIK"/>
<dbReference type="OrthoDB" id="411251at2759"/>
<dbReference type="BioCyc" id="YEAST:G3O-30679-MONOMER"/>
<dbReference type="BioGRID-ORCS" id="852676">
    <property type="hits" value="1 hit in 10 CRISPR screens"/>
</dbReference>
<dbReference type="PRO" id="PR:P53093"/>
<dbReference type="Proteomes" id="UP000002311">
    <property type="component" value="Chromosome VII"/>
</dbReference>
<dbReference type="RNAct" id="P53093">
    <property type="molecule type" value="protein"/>
</dbReference>
<dbReference type="GO" id="GO:0005794">
    <property type="term" value="C:Golgi apparatus"/>
    <property type="evidence" value="ECO:0000314"/>
    <property type="project" value="SGD"/>
</dbReference>
<dbReference type="GO" id="GO:0000139">
    <property type="term" value="C:Golgi membrane"/>
    <property type="evidence" value="ECO:0007669"/>
    <property type="project" value="UniProtKB-SubCell"/>
</dbReference>
<dbReference type="GO" id="GO:0005802">
    <property type="term" value="C:trans-Golgi network"/>
    <property type="evidence" value="ECO:0000318"/>
    <property type="project" value="GO_Central"/>
</dbReference>
<dbReference type="GO" id="GO:0042802">
    <property type="term" value="F:identical protein binding"/>
    <property type="evidence" value="ECO:0000353"/>
    <property type="project" value="IntAct"/>
</dbReference>
<dbReference type="GO" id="GO:0031267">
    <property type="term" value="F:small GTPase binding"/>
    <property type="evidence" value="ECO:0000353"/>
    <property type="project" value="SGD"/>
</dbReference>
<dbReference type="GO" id="GO:0006888">
    <property type="term" value="P:endoplasmic reticulum to Golgi vesicle-mediated transport"/>
    <property type="evidence" value="ECO:0007669"/>
    <property type="project" value="InterPro"/>
</dbReference>
<dbReference type="InterPro" id="IPR045231">
    <property type="entry name" value="Yip1/4-like"/>
</dbReference>
<dbReference type="PANTHER" id="PTHR21236">
    <property type="entry name" value="GOLGI MEMBRANE PROTEIN YIP1"/>
    <property type="match status" value="1"/>
</dbReference>
<dbReference type="PANTHER" id="PTHR21236:SF1">
    <property type="entry name" value="PROTEIN YIPF6"/>
    <property type="match status" value="1"/>
</dbReference>
<keyword id="KW-0333">Golgi apparatus</keyword>
<keyword id="KW-0472">Membrane</keyword>
<keyword id="KW-1185">Reference proteome</keyword>
<keyword id="KW-0812">Transmembrane</keyword>
<keyword id="KW-1133">Transmembrane helix</keyword>
<accession>P53093</accession>
<accession>D6VTV5</accession>
<comment type="function">
    <text evidence="3">May be involved in proper membrane localization of Rab GTPases.</text>
</comment>
<comment type="subunit">
    <text evidence="2 3">Interacts with TVP18, TVP23, YIP1 and YIP5. Interacts with SEC4, YPT1, YPT6, YPT7, YPT10, YPT11, YPT31, YPT32 and YPT52; These proteins are all Rab GTPases.</text>
</comment>
<comment type="interaction">
    <interactant intactId="EBI-24124">
        <id>P53093</id>
    </interactant>
    <interactant intactId="EBI-16858">
        <id>P07560</id>
        <label>SEC4</label>
    </interactant>
    <organismsDiffer>false</organismsDiffer>
    <experiments>2</experiments>
</comment>
<comment type="interaction">
    <interactant intactId="EBI-24124">
        <id>P53093</id>
    </interactant>
    <interactant intactId="EBI-28230">
        <id>P53845</id>
        <label>YIF1</label>
    </interactant>
    <organismsDiffer>false</organismsDiffer>
    <experiments>2</experiments>
</comment>
<comment type="interaction">
    <interactant intactId="EBI-24124">
        <id>P53093</id>
    </interactant>
    <interactant intactId="EBI-24124">
        <id>P53093</id>
        <label>YIP4</label>
    </interactant>
    <organismsDiffer>false</organismsDiffer>
    <experiments>2</experiments>
</comment>
<comment type="interaction">
    <interactant intactId="EBI-24124">
        <id>P53093</id>
    </interactant>
    <interactant intactId="EBI-24051">
        <id>P53108</id>
        <label>YIP5</label>
    </interactant>
    <organismsDiffer>false</organismsDiffer>
    <experiments>3</experiments>
</comment>
<comment type="interaction">
    <interactant intactId="EBI-24124">
        <id>P53093</id>
    </interactant>
    <interactant intactId="EBI-29496">
        <id>P01123</id>
        <label>YPT1</label>
    </interactant>
    <organismsDiffer>false</organismsDiffer>
    <experiments>2</experiments>
</comment>
<comment type="interaction">
    <interactant intactId="EBI-24124">
        <id>P53093</id>
    </interactant>
    <interactant intactId="EBI-29357">
        <id>P38146</id>
        <label>YPT10</label>
    </interactant>
    <organismsDiffer>false</organismsDiffer>
    <experiments>2</experiments>
</comment>
<comment type="interaction">
    <interactant intactId="EBI-24124">
        <id>P53093</id>
    </interactant>
    <interactant intactId="EBI-29362">
        <id>P48559</id>
        <label>YPT11</label>
    </interactant>
    <organismsDiffer>false</organismsDiffer>
    <experiments>2</experiments>
</comment>
<comment type="interaction">
    <interactant intactId="EBI-24124">
        <id>P53093</id>
    </interactant>
    <interactant intactId="EBI-29379">
        <id>P38555</id>
        <label>YPT31</label>
    </interactant>
    <organismsDiffer>false</organismsDiffer>
    <experiments>2</experiments>
</comment>
<comment type="interaction">
    <interactant intactId="EBI-24124">
        <id>P53093</id>
    </interactant>
    <interactant intactId="EBI-29384">
        <id>P51996</id>
        <label>YPT32</label>
    </interactant>
    <organismsDiffer>false</organismsDiffer>
    <experiments>2</experiments>
</comment>
<comment type="interaction">
    <interactant intactId="EBI-24124">
        <id>P53093</id>
    </interactant>
    <interactant intactId="EBI-24665">
        <id>P38815</id>
        <label>YPT35</label>
    </interactant>
    <organismsDiffer>false</organismsDiffer>
    <experiments>2</experiments>
</comment>
<comment type="interaction">
    <interactant intactId="EBI-24124">
        <id>P53093</id>
    </interactant>
    <interactant intactId="EBI-29407">
        <id>P36018</id>
        <label>YPT52</label>
    </interactant>
    <organismsDiffer>false</organismsDiffer>
    <experiments>2</experiments>
</comment>
<comment type="interaction">
    <interactant intactId="EBI-24124">
        <id>P53093</id>
    </interactant>
    <interactant intactId="EBI-29503">
        <id>Q99260</id>
        <label>YPT6</label>
    </interactant>
    <organismsDiffer>false</organismsDiffer>
    <experiments>2</experiments>
</comment>
<comment type="interaction">
    <interactant intactId="EBI-24124">
        <id>P53093</id>
    </interactant>
    <interactant intactId="EBI-29509">
        <id>P32939</id>
        <label>YPT7</label>
    </interactant>
    <organismsDiffer>false</organismsDiffer>
    <experiments>2</experiments>
</comment>
<comment type="subcellular location">
    <subcellularLocation>
        <location evidence="3">Golgi apparatus membrane</location>
        <topology evidence="3">Multi-pass membrane protein</topology>
    </subcellularLocation>
</comment>
<comment type="similarity">
    <text evidence="4">Belongs to the YIP1 family.</text>
</comment>
<comment type="sequence caution" evidence="4">
    <conflict type="frameshift">
        <sequence resource="EMBL-CDS" id="CAA62946"/>
    </conflict>
</comment>
<comment type="sequence caution" evidence="4">
    <conflict type="frameshift">
        <sequence resource="EMBL-CDS" id="CAA96911"/>
    </conflict>
</comment>
<reference key="1">
    <citation type="journal article" date="1997" name="Yeast">
        <title>Sequencing of a 40.5 kb fragment located on the left arm of chromosome VII from Saccharomyces cerevisiae.</title>
        <authorList>
            <person name="Coglievina M."/>
            <person name="Klima R."/>
            <person name="Bertani I."/>
            <person name="Delneri D."/>
            <person name="Zaccaria P."/>
            <person name="Bruschi C.V."/>
        </authorList>
    </citation>
    <scope>NUCLEOTIDE SEQUENCE [GENOMIC DNA]</scope>
    <source>
        <strain>ATCC 96604 / S288c / FY1679</strain>
    </source>
</reference>
<reference key="2">
    <citation type="journal article" date="1997" name="Nature">
        <title>The nucleotide sequence of Saccharomyces cerevisiae chromosome VII.</title>
        <authorList>
            <person name="Tettelin H."/>
            <person name="Agostoni-Carbone M.L."/>
            <person name="Albermann K."/>
            <person name="Albers M."/>
            <person name="Arroyo J."/>
            <person name="Backes U."/>
            <person name="Barreiros T."/>
            <person name="Bertani I."/>
            <person name="Bjourson A.J."/>
            <person name="Brueckner M."/>
            <person name="Bruschi C.V."/>
            <person name="Carignani G."/>
            <person name="Castagnoli L."/>
            <person name="Cerdan E."/>
            <person name="Clemente M.L."/>
            <person name="Coblenz A."/>
            <person name="Coglievina M."/>
            <person name="Coissac E."/>
            <person name="Defoor E."/>
            <person name="Del Bino S."/>
            <person name="Delius H."/>
            <person name="Delneri D."/>
            <person name="de Wergifosse P."/>
            <person name="Dujon B."/>
            <person name="Durand P."/>
            <person name="Entian K.-D."/>
            <person name="Eraso P."/>
            <person name="Escribano V."/>
            <person name="Fabiani L."/>
            <person name="Fartmann B."/>
            <person name="Feroli F."/>
            <person name="Feuermann M."/>
            <person name="Frontali L."/>
            <person name="Garcia-Gonzalez M."/>
            <person name="Garcia-Saez M.I."/>
            <person name="Goffeau A."/>
            <person name="Guerreiro P."/>
            <person name="Hani J."/>
            <person name="Hansen M."/>
            <person name="Hebling U."/>
            <person name="Hernandez K."/>
            <person name="Heumann K."/>
            <person name="Hilger F."/>
            <person name="Hofmann B."/>
            <person name="Indge K.J."/>
            <person name="James C.M."/>
            <person name="Klima R."/>
            <person name="Koetter P."/>
            <person name="Kramer B."/>
            <person name="Kramer W."/>
            <person name="Lauquin G."/>
            <person name="Leuther H."/>
            <person name="Louis E.J."/>
            <person name="Maillier E."/>
            <person name="Marconi A."/>
            <person name="Martegani E."/>
            <person name="Mazon M.J."/>
            <person name="Mazzoni C."/>
            <person name="McReynolds A.D.K."/>
            <person name="Melchioretto P."/>
            <person name="Mewes H.-W."/>
            <person name="Minenkova O."/>
            <person name="Mueller-Auer S."/>
            <person name="Nawrocki A."/>
            <person name="Netter P."/>
            <person name="Neu R."/>
            <person name="Nombela C."/>
            <person name="Oliver S.G."/>
            <person name="Panzeri L."/>
            <person name="Paoluzi S."/>
            <person name="Plevani P."/>
            <person name="Portetelle D."/>
            <person name="Portillo F."/>
            <person name="Potier S."/>
            <person name="Purnelle B."/>
            <person name="Rieger M."/>
            <person name="Riles L."/>
            <person name="Rinaldi T."/>
            <person name="Robben J."/>
            <person name="Rodrigues-Pousada C."/>
            <person name="Rodriguez-Belmonte E."/>
            <person name="Rodriguez-Torres A.M."/>
            <person name="Rose M."/>
            <person name="Ruzzi M."/>
            <person name="Saliola M."/>
            <person name="Sanchez-Perez M."/>
            <person name="Schaefer B."/>
            <person name="Schaefer M."/>
            <person name="Scharfe M."/>
            <person name="Schmidheini T."/>
            <person name="Schreer A."/>
            <person name="Skala J."/>
            <person name="Souciet J.-L."/>
            <person name="Steensma H.Y."/>
            <person name="Talla E."/>
            <person name="Thierry A."/>
            <person name="Vandenbol M."/>
            <person name="van der Aart Q.J.M."/>
            <person name="Van Dyck L."/>
            <person name="Vanoni M."/>
            <person name="Verhasselt P."/>
            <person name="Voet M."/>
            <person name="Volckaert G."/>
            <person name="Wambutt R."/>
            <person name="Watson M.D."/>
            <person name="Weber N."/>
            <person name="Wedler E."/>
            <person name="Wedler H."/>
            <person name="Wipfli P."/>
            <person name="Wolf K."/>
            <person name="Wright L.F."/>
            <person name="Zaccaria P."/>
            <person name="Zimmermann M."/>
            <person name="Zollner A."/>
            <person name="Kleine K."/>
        </authorList>
    </citation>
    <scope>NUCLEOTIDE SEQUENCE [LARGE SCALE GENOMIC DNA]</scope>
    <source>
        <strain>ATCC 204508 / S288c</strain>
    </source>
</reference>
<reference key="3">
    <citation type="journal article" date="2014" name="G3 (Bethesda)">
        <title>The reference genome sequence of Saccharomyces cerevisiae: Then and now.</title>
        <authorList>
            <person name="Engel S.R."/>
            <person name="Dietrich F.S."/>
            <person name="Fisk D.G."/>
            <person name="Binkley G."/>
            <person name="Balakrishnan R."/>
            <person name="Costanzo M.C."/>
            <person name="Dwight S.S."/>
            <person name="Hitz B.C."/>
            <person name="Karra K."/>
            <person name="Nash R.S."/>
            <person name="Weng S."/>
            <person name="Wong E.D."/>
            <person name="Lloyd P."/>
            <person name="Skrzypek M.S."/>
            <person name="Miyasato S.R."/>
            <person name="Simison M."/>
            <person name="Cherry J.M."/>
        </authorList>
    </citation>
    <scope>GENOME REANNOTATION</scope>
    <source>
        <strain>ATCC 204508 / S288c</strain>
    </source>
</reference>
<reference key="4">
    <citation type="journal article" date="2002" name="FEBS Lett.">
        <title>Identification of the novel proteins Yip4p and Yip5p as Rab GTPase interacting factors.</title>
        <authorList>
            <person name="Calero M."/>
            <person name="Winand N.J."/>
            <person name="Collins R.N."/>
        </authorList>
    </citation>
    <scope>INTERACTION WITH SEC4; YIP1; YIP5; YPT1; YPT6; YPT7; YPT10; YPT11; YPT31; YPT32 AND YPT52</scope>
</reference>
<reference key="5">
    <citation type="journal article" date="2003" name="Nature">
        <title>Sequencing and comparison of yeast species to identify genes and regulatory elements.</title>
        <authorList>
            <person name="Kellis M."/>
            <person name="Patterson N."/>
            <person name="Endrizzi M."/>
            <person name="Birren B.W."/>
            <person name="Lander E.S."/>
        </authorList>
    </citation>
    <scope>IDENTIFICATION OF FRAMESHIFTS</scope>
</reference>
<reference key="6">
    <citation type="journal article" date="2007" name="Exp. Cell Res.">
        <title>Tvp38, Tvp23, Tvp18 and Tvp15: novel membrane proteins in the Tlg2-containing Golgi/endosome compartments of Saccharomyces cerevisiae.</title>
        <authorList>
            <person name="Inadome H."/>
            <person name="Noda Y."/>
            <person name="Kamimura Y."/>
            <person name="Adachi H."/>
            <person name="Yoda K."/>
        </authorList>
    </citation>
    <scope>FUNCTION</scope>
    <scope>SUBCELLULAR LOCATION</scope>
    <scope>INTERACTION WITH TVP18; TVP23 AND YIP5</scope>
</reference>
<name>YIP4_YEAST</name>
<gene>
    <name type="primary">YIP4</name>
    <name type="ordered locus">YGL198W</name>
    <name type="ORF">G1304</name>
</gene>
<protein>
    <recommendedName>
        <fullName>Protein YIP4</fullName>
    </recommendedName>
    <alternativeName>
        <fullName>YPT-interacting protein 4</fullName>
    </alternativeName>
</protein>
<proteinExistence type="evidence at protein level"/>
<organism>
    <name type="scientific">Saccharomyces cerevisiae (strain ATCC 204508 / S288c)</name>
    <name type="common">Baker's yeast</name>
    <dbReference type="NCBI Taxonomy" id="559292"/>
    <lineage>
        <taxon>Eukaryota</taxon>
        <taxon>Fungi</taxon>
        <taxon>Dikarya</taxon>
        <taxon>Ascomycota</taxon>
        <taxon>Saccharomycotina</taxon>
        <taxon>Saccharomycetes</taxon>
        <taxon>Saccharomycetales</taxon>
        <taxon>Saccharomycetaceae</taxon>
        <taxon>Saccharomyces</taxon>
    </lineage>
</organism>